<protein>
    <recommendedName>
        <fullName>Keratinocyte proline-rich protein</fullName>
        <shortName>hKPRP</shortName>
    </recommendedName>
</protein>
<organism>
    <name type="scientific">Homo sapiens</name>
    <name type="common">Human</name>
    <dbReference type="NCBI Taxonomy" id="9606"/>
    <lineage>
        <taxon>Eukaryota</taxon>
        <taxon>Metazoa</taxon>
        <taxon>Chordata</taxon>
        <taxon>Craniata</taxon>
        <taxon>Vertebrata</taxon>
        <taxon>Euteleostomi</taxon>
        <taxon>Mammalia</taxon>
        <taxon>Eutheria</taxon>
        <taxon>Euarchontoglires</taxon>
        <taxon>Primates</taxon>
        <taxon>Haplorrhini</taxon>
        <taxon>Catarrhini</taxon>
        <taxon>Hominidae</taxon>
        <taxon>Homo</taxon>
    </lineage>
</organism>
<proteinExistence type="evidence at protein level"/>
<accession>Q5T749</accession>
<comment type="interaction">
    <interactant intactId="EBI-10981970">
        <id>Q5T749</id>
    </interactant>
    <interactant intactId="EBI-11976299">
        <id>Q5BKX5-3</id>
        <label>ACTMAP</label>
    </interactant>
    <organismsDiffer>false</organismsDiffer>
    <experiments>3</experiments>
</comment>
<comment type="interaction">
    <interactant intactId="EBI-10981970">
        <id>Q5T749</id>
    </interactant>
    <interactant intactId="EBI-357530">
        <id>Q9ULX6</id>
        <label>AKAP8L</label>
    </interactant>
    <organismsDiffer>false</organismsDiffer>
    <experiments>3</experiments>
</comment>
<comment type="interaction">
    <interactant intactId="EBI-10981970">
        <id>Q5T749</id>
    </interactant>
    <interactant intactId="EBI-11954519">
        <id>Q49AR9</id>
        <label>ANKS1A</label>
    </interactant>
    <organismsDiffer>false</organismsDiffer>
    <experiments>3</experiments>
</comment>
<comment type="interaction">
    <interactant intactId="EBI-10981970">
        <id>Q5T749</id>
    </interactant>
    <interactant intactId="EBI-12006308">
        <id>Q7Z3C6-3</id>
        <label>ATG9A</label>
    </interactant>
    <organismsDiffer>false</organismsDiffer>
    <experiments>5</experiments>
</comment>
<comment type="interaction">
    <interactant intactId="EBI-10981970">
        <id>Q5T749</id>
    </interactant>
    <interactant intactId="EBI-6590057">
        <id>P35070</id>
        <label>BTC</label>
    </interactant>
    <organismsDiffer>false</organismsDiffer>
    <experiments>3</experiments>
</comment>
<comment type="interaction">
    <interactant intactId="EBI-10981970">
        <id>Q5T749</id>
    </interactant>
    <interactant intactId="EBI-744545">
        <id>Q8NEC5</id>
        <label>CATSPER1</label>
    </interactant>
    <organismsDiffer>false</organismsDiffer>
    <experiments>5</experiments>
</comment>
<comment type="interaction">
    <interactant intactId="EBI-10981970">
        <id>Q5T749</id>
    </interactant>
    <interactant intactId="EBI-10961624">
        <id>Q2TAC2-2</id>
        <label>CCDC57</label>
    </interactant>
    <organismsDiffer>false</organismsDiffer>
    <experiments>3</experiments>
</comment>
<comment type="interaction">
    <interactant intactId="EBI-10981970">
        <id>Q5T749</id>
    </interactant>
    <interactant intactId="EBI-12360993">
        <id>P23141-3</id>
        <label>CES1</label>
    </interactant>
    <organismsDiffer>false</organismsDiffer>
    <experiments>3</experiments>
</comment>
<comment type="interaction">
    <interactant intactId="EBI-10981970">
        <id>Q5T749</id>
    </interactant>
    <interactant intactId="EBI-456371">
        <id>P61024</id>
        <label>CKS1B</label>
    </interactant>
    <organismsDiffer>false</organismsDiffer>
    <experiments>3</experiments>
</comment>
<comment type="interaction">
    <interactant intactId="EBI-10981970">
        <id>Q5T749</id>
    </interactant>
    <interactant intactId="EBI-11980535">
        <id>P51800-3</id>
        <label>CLCNKA</label>
    </interactant>
    <organismsDiffer>false</organismsDiffer>
    <experiments>3</experiments>
</comment>
<comment type="interaction">
    <interactant intactId="EBI-10981970">
        <id>Q5T749</id>
    </interactant>
    <interactant intactId="EBI-12819063">
        <id>Q9BYD5</id>
        <label>CNFN</label>
    </interactant>
    <organismsDiffer>false</organismsDiffer>
    <experiments>3</experiments>
</comment>
<comment type="interaction">
    <interactant intactId="EBI-10981970">
        <id>Q5T749</id>
    </interactant>
    <interactant intactId="EBI-741032">
        <id>Q8NE01</id>
        <label>CNNM3</label>
    </interactant>
    <organismsDiffer>false</organismsDiffer>
    <experiments>3</experiments>
</comment>
<comment type="interaction">
    <interactant intactId="EBI-10981970">
        <id>Q5T749</id>
    </interactant>
    <interactant intactId="EBI-747133">
        <id>P27658</id>
        <label>COL8A1</label>
    </interactant>
    <organismsDiffer>false</organismsDiffer>
    <experiments>3</experiments>
</comment>
<comment type="interaction">
    <interactant intactId="EBI-10981970">
        <id>Q5T749</id>
    </interactant>
    <interactant intactId="EBI-10192698">
        <id>Q02930-3</id>
        <label>CREB5</label>
    </interactant>
    <organismsDiffer>false</organismsDiffer>
    <experiments>5</experiments>
</comment>
<comment type="interaction">
    <interactant intactId="EBI-10981970">
        <id>Q5T749</id>
    </interactant>
    <interactant intactId="EBI-3867333">
        <id>A8MQ03</id>
        <label>CYSRT1</label>
    </interactant>
    <organismsDiffer>false</organismsDiffer>
    <experiments>7</experiments>
</comment>
<comment type="interaction">
    <interactant intactId="EBI-10981970">
        <id>Q5T749</id>
    </interactant>
    <interactant intactId="EBI-9679045">
        <id>Q9NQL9</id>
        <label>DMRT3</label>
    </interactant>
    <organismsDiffer>false</organismsDiffer>
    <experiments>5</experiments>
</comment>
<comment type="interaction">
    <interactant intactId="EBI-10981970">
        <id>Q5T749</id>
    </interactant>
    <interactant intactId="EBI-1053596">
        <id>Q13627</id>
        <label>DYRK1A</label>
    </interactant>
    <organismsDiffer>false</organismsDiffer>
    <experiments>3</experiments>
</comment>
<comment type="interaction">
    <interactant intactId="EBI-10981970">
        <id>Q5T749</id>
    </interactant>
    <interactant intactId="EBI-1053347">
        <id>Q9NZC4</id>
        <label>EHF</label>
    </interactant>
    <organismsDiffer>false</organismsDiffer>
    <experiments>2</experiments>
</comment>
<comment type="interaction">
    <interactant intactId="EBI-10981970">
        <id>Q5T749</id>
    </interactant>
    <interactant intactId="EBI-347740">
        <id>P60228</id>
        <label>EIF3E</label>
    </interactant>
    <organismsDiffer>false</organismsDiffer>
    <experiments>3</experiments>
</comment>
<comment type="interaction">
    <interactant intactId="EBI-10981970">
        <id>Q5T749</id>
    </interactant>
    <interactant intactId="EBI-12259414">
        <id>Q92731-3</id>
        <label>ESR2</label>
    </interactant>
    <organismsDiffer>false</organismsDiffer>
    <experiments>3</experiments>
</comment>
<comment type="interaction">
    <interactant intactId="EBI-10981970">
        <id>Q5T749</id>
    </interactant>
    <interactant intactId="EBI-12006844">
        <id>A6H8Z2</id>
        <label>FAM221B</label>
    </interactant>
    <organismsDiffer>false</organismsDiffer>
    <experiments>3</experiments>
</comment>
<comment type="interaction">
    <interactant intactId="EBI-10981970">
        <id>Q5T749</id>
    </interactant>
    <interactant intactId="EBI-12886238">
        <id>Q86X60-2</id>
        <label>FAM72B</label>
    </interactant>
    <organismsDiffer>false</organismsDiffer>
    <experiments>3</experiments>
</comment>
<comment type="interaction">
    <interactant intactId="EBI-10981970">
        <id>Q5T749</id>
    </interactant>
    <interactant intactId="EBI-2510157">
        <id>Q96EF6</id>
        <label>FBXO17</label>
    </interactant>
    <organismsDiffer>false</organismsDiffer>
    <experiments>3</experiments>
</comment>
<comment type="interaction">
    <interactant intactId="EBI-10981970">
        <id>Q5T749</id>
    </interactant>
    <interactant intactId="EBI-11977403">
        <id>A0A0C3SFZ9</id>
        <label>FCHO1</label>
    </interactant>
    <organismsDiffer>false</organismsDiffer>
    <experiments>3</experiments>
</comment>
<comment type="interaction">
    <interactant intactId="EBI-10981970">
        <id>Q5T749</id>
    </interactant>
    <interactant intactId="EBI-701903">
        <id>Q14192</id>
        <label>FHL2</label>
    </interactant>
    <organismsDiffer>false</organismsDiffer>
    <experiments>3</experiments>
</comment>
<comment type="interaction">
    <interactant intactId="EBI-10981970">
        <id>Q5T749</id>
    </interactant>
    <interactant intactId="EBI-741101">
        <id>Q13643</id>
        <label>FHL3</label>
    </interactant>
    <organismsDiffer>false</organismsDiffer>
    <experiments>4</experiments>
</comment>
<comment type="interaction">
    <interactant intactId="EBI-10981970">
        <id>Q5T749</id>
    </interactant>
    <interactant intactId="EBI-725515">
        <id>O43559</id>
        <label>FRS3</label>
    </interactant>
    <organismsDiffer>false</organismsDiffer>
    <experiments>5</experiments>
</comment>
<comment type="interaction">
    <interactant intactId="EBI-10981970">
        <id>Q5T749</id>
    </interactant>
    <interactant intactId="EBI-374781">
        <id>O76003</id>
        <label>GLRX3</label>
    </interactant>
    <organismsDiffer>false</organismsDiffer>
    <experiments>3</experiments>
</comment>
<comment type="interaction">
    <interactant intactId="EBI-10981970">
        <id>Q5T749</id>
    </interactant>
    <interactant intactId="EBI-11975289">
        <id>Q9Y223-2</id>
        <label>GNE</label>
    </interactant>
    <organismsDiffer>false</organismsDiffer>
    <experiments>3</experiments>
</comment>
<comment type="interaction">
    <interactant intactId="EBI-10981970">
        <id>Q5T749</id>
    </interactant>
    <interactant intactId="EBI-740418">
        <id>O75791</id>
        <label>GRAP2</label>
    </interactant>
    <organismsDiffer>false</organismsDiffer>
    <experiments>3</experiments>
</comment>
<comment type="interaction">
    <interactant intactId="EBI-10981970">
        <id>Q5T749</id>
    </interactant>
    <interactant intactId="EBI-11978177">
        <id>Q96NT3-2</id>
        <label>GUCD1</label>
    </interactant>
    <organismsDiffer>false</organismsDiffer>
    <experiments>3</experiments>
</comment>
<comment type="interaction">
    <interactant intactId="EBI-10981970">
        <id>Q5T749</id>
    </interactant>
    <interactant intactId="EBI-9834454">
        <id>P08631-2</id>
        <label>HCK</label>
    </interactant>
    <organismsDiffer>false</organismsDiffer>
    <experiments>3</experiments>
</comment>
<comment type="interaction">
    <interactant intactId="EBI-10981970">
        <id>Q5T749</id>
    </interactant>
    <interactant intactId="EBI-5460660">
        <id>Q96MH2</id>
        <label>HEXIM2</label>
    </interactant>
    <organismsDiffer>false</organismsDiffer>
    <experiments>3</experiments>
</comment>
<comment type="interaction">
    <interactant intactId="EBI-10981970">
        <id>Q5T749</id>
    </interactant>
    <interactant intactId="EBI-352986">
        <id>P52597</id>
        <label>HNRNPF</label>
    </interactant>
    <organismsDiffer>false</organismsDiffer>
    <experiments>3</experiments>
</comment>
<comment type="interaction">
    <interactant intactId="EBI-10981970">
        <id>Q5T749</id>
    </interactant>
    <interactant intactId="EBI-740785">
        <id>P49639</id>
        <label>HOXA1</label>
    </interactant>
    <organismsDiffer>false</organismsDiffer>
    <experiments>8</experiments>
</comment>
<comment type="interaction">
    <interactant intactId="EBI-10981970">
        <id>Q5T749</id>
    </interactant>
    <interactant intactId="EBI-1752118">
        <id>P31273</id>
        <label>HOXC8</label>
    </interactant>
    <organismsDiffer>false</organismsDiffer>
    <experiments>3</experiments>
</comment>
<comment type="interaction">
    <interactant intactId="EBI-10981970">
        <id>Q5T749</id>
    </interactant>
    <interactant intactId="EBI-3918847">
        <id>Q9H2F3</id>
        <label>HSD3B7</label>
    </interactant>
    <organismsDiffer>false</organismsDiffer>
    <experiments>3</experiments>
</comment>
<comment type="interaction">
    <interactant intactId="EBI-10981970">
        <id>Q5T749</id>
    </interactant>
    <interactant intactId="EBI-11051601">
        <id>P16144-2</id>
        <label>ITGB4</label>
    </interactant>
    <organismsDiffer>false</organismsDiffer>
    <experiments>3</experiments>
</comment>
<comment type="interaction">
    <interactant intactId="EBI-10981970">
        <id>Q5T749</id>
    </interactant>
    <interactant intactId="EBI-11028396">
        <id>Q6UXX5</id>
        <label>ITIH6</label>
    </interactant>
    <organismsDiffer>false</organismsDiffer>
    <experiments>3</experiments>
</comment>
<comment type="interaction">
    <interactant intactId="EBI-10981970">
        <id>Q5T749</id>
    </interactant>
    <interactant intactId="EBI-11749135">
        <id>Q8IUG1</id>
        <label>KRTAP1-3</label>
    </interactant>
    <organismsDiffer>false</organismsDiffer>
    <experiments>3</experiments>
</comment>
<comment type="interaction">
    <interactant intactId="EBI-10981970">
        <id>Q5T749</id>
    </interactant>
    <interactant intactId="EBI-11741292">
        <id>Q9BYS1</id>
        <label>KRTAP1-5</label>
    </interactant>
    <organismsDiffer>false</organismsDiffer>
    <experiments>3</experiments>
</comment>
<comment type="interaction">
    <interactant intactId="EBI-10981970">
        <id>Q5T749</id>
    </interactant>
    <interactant intactId="EBI-10171774">
        <id>P60410</id>
        <label>KRTAP10-8</label>
    </interactant>
    <organismsDiffer>false</organismsDiffer>
    <experiments>3</experiments>
</comment>
<comment type="interaction">
    <interactant intactId="EBI-10981970">
        <id>Q5T749</id>
    </interactant>
    <interactant intactId="EBI-11953334">
        <id>P60328</id>
        <label>KRTAP12-3</label>
    </interactant>
    <organismsDiffer>false</organismsDiffer>
    <experiments>6</experiments>
</comment>
<comment type="interaction">
    <interactant intactId="EBI-10981970">
        <id>Q5T749</id>
    </interactant>
    <interactant intactId="EBI-11953846">
        <id>Q52LG2</id>
        <label>KRTAP13-2</label>
    </interactant>
    <organismsDiffer>false</organismsDiffer>
    <experiments>3</experiments>
</comment>
<comment type="interaction">
    <interactant intactId="EBI-10981970">
        <id>Q5T749</id>
    </interactant>
    <interactant intactId="EBI-10241252">
        <id>Q3SY46</id>
        <label>KRTAP13-3</label>
    </interactant>
    <organismsDiffer>false</organismsDiffer>
    <experiments>3</experiments>
</comment>
<comment type="interaction">
    <interactant intactId="EBI-10981970">
        <id>Q5T749</id>
    </interactant>
    <interactant intactId="EBI-11992140">
        <id>Q3LI76</id>
        <label>KRTAP15-1</label>
    </interactant>
    <organismsDiffer>false</organismsDiffer>
    <experiments>3</experiments>
</comment>
<comment type="interaction">
    <interactant intactId="EBI-10981970">
        <id>Q5T749</id>
    </interactant>
    <interactant intactId="EBI-12811111">
        <id>Q8IUB9</id>
        <label>KRTAP19-1</label>
    </interactant>
    <organismsDiffer>false</organismsDiffer>
    <experiments>3</experiments>
</comment>
<comment type="interaction">
    <interactant intactId="EBI-10981970">
        <id>Q5T749</id>
    </interactant>
    <interactant intactId="EBI-12196745">
        <id>Q3LHN2</id>
        <label>KRTAP19-2</label>
    </interactant>
    <organismsDiffer>false</organismsDiffer>
    <experiments>3</experiments>
</comment>
<comment type="interaction">
    <interactant intactId="EBI-10981970">
        <id>Q5T749</id>
    </interactant>
    <interactant intactId="EBI-1048945">
        <id>Q3LI72</id>
        <label>KRTAP19-5</label>
    </interactant>
    <organismsDiffer>false</organismsDiffer>
    <experiments>3</experiments>
</comment>
<comment type="interaction">
    <interactant intactId="EBI-10981970">
        <id>Q5T749</id>
    </interactant>
    <interactant intactId="EBI-12805508">
        <id>Q3LI70</id>
        <label>KRTAP19-6</label>
    </interactant>
    <organismsDiffer>false</organismsDiffer>
    <experiments>3</experiments>
</comment>
<comment type="interaction">
    <interactant intactId="EBI-10981970">
        <id>Q5T749</id>
    </interactant>
    <interactant intactId="EBI-10241353">
        <id>Q3SYF9</id>
        <label>KRTAP19-7</label>
    </interactant>
    <organismsDiffer>false</organismsDiffer>
    <experiments>3</experiments>
</comment>
<comment type="interaction">
    <interactant intactId="EBI-10981970">
        <id>Q5T749</id>
    </interactant>
    <interactant intactId="EBI-751260">
        <id>Q9BYR7</id>
        <label>KRTAP3-2</label>
    </interactant>
    <organismsDiffer>false</organismsDiffer>
    <experiments>3</experiments>
</comment>
<comment type="interaction">
    <interactant intactId="EBI-10981970">
        <id>Q5T749</id>
    </interactant>
    <interactant intactId="EBI-10172511">
        <id>Q9BYR5</id>
        <label>KRTAP4-2</label>
    </interactant>
    <organismsDiffer>false</organismsDiffer>
    <experiments>3</experiments>
</comment>
<comment type="interaction">
    <interactant intactId="EBI-10981970">
        <id>Q5T749</id>
    </interactant>
    <interactant intactId="EBI-11993254">
        <id>Q9BYR2</id>
        <label>KRTAP4-5</label>
    </interactant>
    <organismsDiffer>false</organismsDiffer>
    <experiments>5</experiments>
</comment>
<comment type="interaction">
    <interactant intactId="EBI-10981970">
        <id>Q5T749</id>
    </interactant>
    <interactant intactId="EBI-11974251">
        <id>Q6L8H2</id>
        <label>KRTAP5-3</label>
    </interactant>
    <organismsDiffer>false</organismsDiffer>
    <experiments>3</experiments>
</comment>
<comment type="interaction">
    <interactant intactId="EBI-10981970">
        <id>Q5T749</id>
    </interactant>
    <interactant intactId="EBI-11987425">
        <id>Q6L8G8</id>
        <label>KRTAP5-7</label>
    </interactant>
    <organismsDiffer>false</organismsDiffer>
    <experiments>3</experiments>
</comment>
<comment type="interaction">
    <interactant intactId="EBI-10981970">
        <id>Q5T749</id>
    </interactant>
    <interactant intactId="EBI-3958099">
        <id>P26371</id>
        <label>KRTAP5-9</label>
    </interactant>
    <organismsDiffer>false</organismsDiffer>
    <experiments>3</experiments>
</comment>
<comment type="interaction">
    <interactant intactId="EBI-10981970">
        <id>Q5T749</id>
    </interactant>
    <interactant intactId="EBI-12111050">
        <id>Q3LI64</id>
        <label>KRTAP6-1</label>
    </interactant>
    <organismsDiffer>false</organismsDiffer>
    <experiments>3</experiments>
</comment>
<comment type="interaction">
    <interactant intactId="EBI-10981970">
        <id>Q5T749</id>
    </interactant>
    <interactant intactId="EBI-11962084">
        <id>Q3LI66</id>
        <label>KRTAP6-2</label>
    </interactant>
    <organismsDiffer>false</organismsDiffer>
    <experiments>3</experiments>
</comment>
<comment type="interaction">
    <interactant intactId="EBI-10981970">
        <id>Q5T749</id>
    </interactant>
    <interactant intactId="EBI-22311199">
        <id>Q3LI67</id>
        <label>KRTAP6-3</label>
    </interactant>
    <organismsDiffer>false</organismsDiffer>
    <experiments>6</experiments>
</comment>
<comment type="interaction">
    <interactant intactId="EBI-10981970">
        <id>Q5T749</id>
    </interactant>
    <interactant intactId="EBI-10245291">
        <id>Q5T5A8</id>
        <label>LCE3C</label>
    </interactant>
    <organismsDiffer>false</organismsDiffer>
    <experiments>5</experiments>
</comment>
<comment type="interaction">
    <interactant intactId="EBI-10981970">
        <id>Q5T749</id>
    </interactant>
    <interactant intactId="EBI-6658837">
        <id>Q9BYE3</id>
        <label>LCE3D</label>
    </interactant>
    <organismsDiffer>false</organismsDiffer>
    <experiments>3</experiments>
</comment>
<comment type="interaction">
    <interactant intactId="EBI-10981970">
        <id>Q5T749</id>
    </interactant>
    <interactant intactId="EBI-10245456">
        <id>Q5T5B0</id>
        <label>LCE3E</label>
    </interactant>
    <organismsDiffer>false</organismsDiffer>
    <experiments>3</experiments>
</comment>
<comment type="interaction">
    <interactant intactId="EBI-10981970">
        <id>Q5T749</id>
    </interactant>
    <interactant intactId="EBI-12864460">
        <id>P48059-3</id>
        <label>LIMS1</label>
    </interactant>
    <organismsDiffer>false</organismsDiffer>
    <experiments>3</experiments>
</comment>
<comment type="interaction">
    <interactant intactId="EBI-10981970">
        <id>Q5T749</id>
    </interactant>
    <interactant intactId="EBI-11959475">
        <id>P25791-3</id>
        <label>LMO2</label>
    </interactant>
    <organismsDiffer>false</organismsDiffer>
    <experiments>3</experiments>
</comment>
<comment type="interaction">
    <interactant intactId="EBI-10981970">
        <id>Q5T749</id>
    </interactant>
    <interactant intactId="EBI-739832">
        <id>Q8TBB1</id>
        <label>LNX1</label>
    </interactant>
    <organismsDiffer>false</organismsDiffer>
    <experiments>3</experiments>
</comment>
<comment type="interaction">
    <interactant intactId="EBI-10981970">
        <id>Q5T749</id>
    </interactant>
    <interactant intactId="EBI-947402">
        <id>O60336</id>
        <label>MAPKBP1</label>
    </interactant>
    <organismsDiffer>false</organismsDiffer>
    <experiments>5</experiments>
</comment>
<comment type="interaction">
    <interactant intactId="EBI-10981970">
        <id>Q5T749</id>
    </interactant>
    <interactant intactId="EBI-16439278">
        <id>Q6FHY5</id>
        <label>MEOX2</label>
    </interactant>
    <organismsDiffer>false</organismsDiffer>
    <experiments>3</experiments>
</comment>
<comment type="interaction">
    <interactant intactId="EBI-10981970">
        <id>Q5T749</id>
    </interactant>
    <interactant intactId="EBI-2801965">
        <id>Q5JXC2</id>
        <label>MIIP</label>
    </interactant>
    <organismsDiffer>false</organismsDiffer>
    <experiments>3</experiments>
</comment>
<comment type="interaction">
    <interactant intactId="EBI-10981970">
        <id>Q5T749</id>
    </interactant>
    <interactant intactId="EBI-744248">
        <id>P40692</id>
        <label>MLH1</label>
    </interactant>
    <organismsDiffer>false</organismsDiffer>
    <experiments>3</experiments>
</comment>
<comment type="interaction">
    <interactant intactId="EBI-10981970">
        <id>Q5T749</id>
    </interactant>
    <interactant intactId="EBI-713635">
        <id>O43639</id>
        <label>NCK2</label>
    </interactant>
    <organismsDiffer>false</organismsDiffer>
    <experiments>3</experiments>
</comment>
<comment type="interaction">
    <interactant intactId="EBI-10981970">
        <id>Q5T749</id>
    </interactant>
    <interactant intactId="EBI-10261509">
        <id>Q8IV28</id>
        <label>NID2</label>
    </interactant>
    <organismsDiffer>false</organismsDiffer>
    <experiments>3</experiments>
</comment>
<comment type="interaction">
    <interactant intactId="EBI-10981970">
        <id>Q5T749</id>
    </interactant>
    <interactant intactId="EBI-22310682">
        <id>P0DPK4</id>
        <label>NOTCH2NLC</label>
    </interactant>
    <organismsDiffer>false</organismsDiffer>
    <experiments>3</experiments>
</comment>
<comment type="interaction">
    <interactant intactId="EBI-10981970">
        <id>Q5T749</id>
    </interactant>
    <interactant intactId="EBI-10210114">
        <id>P48146</id>
        <label>NPBWR2</label>
    </interactant>
    <organismsDiffer>false</organismsDiffer>
    <experiments>3</experiments>
</comment>
<comment type="interaction">
    <interactant intactId="EBI-10981970">
        <id>Q5T749</id>
    </interactant>
    <interactant intactId="EBI-13644623">
        <id>Q92570</id>
        <label>NR4A3</label>
    </interactant>
    <organismsDiffer>false</organismsDiffer>
    <experiments>3</experiments>
</comment>
<comment type="interaction">
    <interactant intactId="EBI-10981970">
        <id>Q5T749</id>
    </interactant>
    <interactant intactId="EBI-743459">
        <id>Q9HB63</id>
        <label>NTN4</label>
    </interactant>
    <organismsDiffer>false</organismsDiffer>
    <experiments>3</experiments>
</comment>
<comment type="interaction">
    <interactant intactId="EBI-10981970">
        <id>Q5T749</id>
    </interactant>
    <interactant intactId="EBI-1210753">
        <id>Q7Z417</id>
        <label>NUFIP2</label>
    </interactant>
    <organismsDiffer>false</organismsDiffer>
    <experiments>5</experiments>
</comment>
<comment type="interaction">
    <interactant intactId="EBI-10981970">
        <id>Q5T749</id>
    </interactant>
    <interactant intactId="EBI-740446">
        <id>P32242</id>
        <label>OTX1</label>
    </interactant>
    <organismsDiffer>false</organismsDiffer>
    <experiments>6</experiments>
</comment>
<comment type="interaction">
    <interactant intactId="EBI-10981970">
        <id>Q5T749</id>
    </interactant>
    <interactant intactId="EBI-641237">
        <id>P09619</id>
        <label>PDGFRB</label>
    </interactant>
    <organismsDiffer>false</organismsDiffer>
    <experiments>3</experiments>
</comment>
<comment type="interaction">
    <interactant intactId="EBI-10981970">
        <id>Q5T749</id>
    </interactant>
    <interactant intactId="EBI-14084211">
        <id>A2BDE7</id>
        <label>PHLDA1</label>
    </interactant>
    <organismsDiffer>false</organismsDiffer>
    <experiments>3</experiments>
</comment>
<comment type="interaction">
    <interactant intactId="EBI-10981970">
        <id>Q5T749</id>
    </interactant>
    <interactant intactId="EBI-726466">
        <id>O15496</id>
        <label>PLA2G10</label>
    </interactant>
    <organismsDiffer>false</organismsDiffer>
    <experiments>3</experiments>
</comment>
<comment type="interaction">
    <interactant intactId="EBI-10981970">
        <id>Q5T749</id>
    </interactant>
    <interactant intactId="EBI-769257">
        <id>Q9NRQ2</id>
        <label>PLSCR4</label>
    </interactant>
    <organismsDiffer>false</organismsDiffer>
    <experiments>3</experiments>
</comment>
<comment type="interaction">
    <interactant intactId="EBI-10981970">
        <id>Q5T749</id>
    </interactant>
    <interactant intactId="EBI-17236143">
        <id>Q12837</id>
        <label>POU4F2</label>
    </interactant>
    <organismsDiffer>false</organismsDiffer>
    <experiments>5</experiments>
</comment>
<comment type="interaction">
    <interactant intactId="EBI-10981970">
        <id>Q5T749</id>
    </interactant>
    <interactant intactId="EBI-2557649">
        <id>Q9Y3C6</id>
        <label>PPIL1</label>
    </interactant>
    <organismsDiffer>false</organismsDiffer>
    <experiments>3</experiments>
</comment>
<comment type="interaction">
    <interactant intactId="EBI-10981970">
        <id>Q5T749</id>
    </interactant>
    <interactant intactId="EBI-12806054">
        <id>P10745</id>
        <label>RBP3</label>
    </interactant>
    <organismsDiffer>false</organismsDiffer>
    <experiments>3</experiments>
</comment>
<comment type="interaction">
    <interactant intactId="EBI-10981970">
        <id>Q5T749</id>
    </interactant>
    <interactant intactId="EBI-712355">
        <id>O15211</id>
        <label>RGL2</label>
    </interactant>
    <organismsDiffer>false</organismsDiffer>
    <experiments>3</experiments>
</comment>
<comment type="interaction">
    <interactant intactId="EBI-10981970">
        <id>Q5T749</id>
    </interactant>
    <interactant intactId="EBI-2341200">
        <id>Q9H0F5</id>
        <label>RNF38</label>
    </interactant>
    <organismsDiffer>false</organismsDiffer>
    <experiments>3</experiments>
</comment>
<comment type="interaction">
    <interactant intactId="EBI-10981970">
        <id>Q5T749</id>
    </interactant>
    <interactant intactId="EBI-12000762">
        <id>Q7Z5V6-2</id>
        <label>SAXO4</label>
    </interactant>
    <organismsDiffer>false</organismsDiffer>
    <experiments>3</experiments>
</comment>
<comment type="interaction">
    <interactant intactId="EBI-10981970">
        <id>Q5T749</id>
    </interactant>
    <interactant intactId="EBI-11017428">
        <id>Q13214-2</id>
        <label>SEMA3B</label>
    </interactant>
    <organismsDiffer>false</organismsDiffer>
    <experiments>3</experiments>
</comment>
<comment type="interaction">
    <interactant intactId="EBI-10981970">
        <id>Q5T749</id>
    </interactant>
    <interactant intactId="EBI-346595">
        <id>Q96B97</id>
        <label>SH3KBP1</label>
    </interactant>
    <organismsDiffer>false</organismsDiffer>
    <experiments>5</experiments>
</comment>
<comment type="interaction">
    <interactant intactId="EBI-10981970">
        <id>Q5T749</id>
    </interactant>
    <interactant intactId="EBI-12806032">
        <id>Q16348</id>
        <label>SLC15A2</label>
    </interactant>
    <organismsDiffer>false</organismsDiffer>
    <experiments>3</experiments>
</comment>
<comment type="interaction">
    <interactant intactId="EBI-10981970">
        <id>Q5T749</id>
    </interactant>
    <interactant intactId="EBI-7082156">
        <id>Q7Z698</id>
        <label>SPRED2</label>
    </interactant>
    <organismsDiffer>false</organismsDiffer>
    <experiments>3</experiments>
</comment>
<comment type="interaction">
    <interactant intactId="EBI-10981970">
        <id>Q5T749</id>
    </interactant>
    <interactant intactId="EBI-3866665">
        <id>O43609</id>
        <label>SPRY1</label>
    </interactant>
    <organismsDiffer>false</organismsDiffer>
    <experiments>3</experiments>
</comment>
<comment type="interaction">
    <interactant intactId="EBI-10981970">
        <id>Q5T749</id>
    </interactant>
    <interactant intactId="EBI-12290641">
        <id>O43610</id>
        <label>SPRY3</label>
    </interactant>
    <organismsDiffer>false</organismsDiffer>
    <experiments>3</experiments>
</comment>
<comment type="interaction">
    <interactant intactId="EBI-10981970">
        <id>Q5T749</id>
    </interactant>
    <interactant intactId="EBI-749295">
        <id>O75716</id>
        <label>STK16</label>
    </interactant>
    <organismsDiffer>false</organismsDiffer>
    <experiments>3</experiments>
</comment>
<comment type="interaction">
    <interactant intactId="EBI-10981970">
        <id>Q5T749</id>
    </interactant>
    <interactant intactId="EBI-750487">
        <id>Q8WW24</id>
        <label>TEKT4</label>
    </interactant>
    <organismsDiffer>false</organismsDiffer>
    <experiments>3</experiments>
</comment>
<comment type="interaction">
    <interactant intactId="EBI-10981970">
        <id>Q5T749</id>
    </interactant>
    <interactant intactId="EBI-11952651">
        <id>Q7Z6R9</id>
        <label>TFAP2D</label>
    </interactant>
    <organismsDiffer>false</organismsDiffer>
    <experiments>3</experiments>
</comment>
<comment type="interaction">
    <interactant intactId="EBI-10981970">
        <id>Q5T749</id>
    </interactant>
    <interactant intactId="EBI-949753">
        <id>Q63HR2</id>
        <label>TNS2</label>
    </interactant>
    <organismsDiffer>false</organismsDiffer>
    <experiments>5</experiments>
</comment>
<comment type="interaction">
    <interactant intactId="EBI-10981970">
        <id>Q5T749</id>
    </interactant>
    <interactant intactId="EBI-5235829">
        <id>Q8IWZ5</id>
        <label>TRIM42</label>
    </interactant>
    <organismsDiffer>false</organismsDiffer>
    <experiments>3</experiments>
</comment>
<comment type="interaction">
    <interactant intactId="EBI-10981970">
        <id>Q5T749</id>
    </interactant>
    <interactant intactId="EBI-742327">
        <id>Q15654</id>
        <label>TRIP6</label>
    </interactant>
    <organismsDiffer>false</organismsDiffer>
    <experiments>3</experiments>
</comment>
<comment type="interaction">
    <interactant intactId="EBI-10981970">
        <id>Q5T749</id>
    </interactant>
    <interactant intactId="EBI-7353612">
        <id>P57075-2</id>
        <label>UBASH3A</label>
    </interactant>
    <organismsDiffer>false</organismsDiffer>
    <experiments>5</experiments>
</comment>
<comment type="interaction">
    <interactant intactId="EBI-10981970">
        <id>Q5T749</id>
    </interactant>
    <interactant intactId="EBI-1380492">
        <id>Q8TF42</id>
        <label>UBASH3B</label>
    </interactant>
    <organismsDiffer>false</organismsDiffer>
    <experiments>5</experiments>
</comment>
<comment type="interaction">
    <interactant intactId="EBI-10981970">
        <id>Q5T749</id>
    </interactant>
    <interactant intactId="EBI-11957216">
        <id>A8MV65-2</id>
        <label>VGLL3</label>
    </interactant>
    <organismsDiffer>false</organismsDiffer>
    <experiments>3</experiments>
</comment>
<comment type="interaction">
    <interactant intactId="EBI-10981970">
        <id>Q5T749</id>
    </interactant>
    <interactant intactId="EBI-11957238">
        <id>Q2TAL6</id>
        <label>VWC2</label>
    </interactant>
    <organismsDiffer>false</organismsDiffer>
    <experiments>3</experiments>
</comment>
<comment type="interaction">
    <interactant intactId="EBI-10981970">
        <id>Q5T749</id>
    </interactant>
    <interactant intactId="EBI-6427977">
        <id>Q96SQ5</id>
        <label>ZNF587</label>
    </interactant>
    <organismsDiffer>false</organismsDiffer>
    <experiments>3</experiments>
</comment>
<comment type="interaction">
    <interactant intactId="EBI-10981970">
        <id>Q5T749</id>
    </interactant>
    <interactant intactId="EBI-10211777">
        <id>A0A384ME25</id>
    </interactant>
    <organismsDiffer>false</organismsDiffer>
    <experiments>3</experiments>
</comment>
<comment type="subcellular location">
    <subcellularLocation>
        <location evidence="1">Cytoplasm</location>
    </subcellularLocation>
</comment>
<comment type="tissue specificity">
    <text evidence="3">Expressed in the upper layer of epidermis and psoriasis (at protein level). Expressed in the upper layer of epidermis and psoriasis.</text>
</comment>
<comment type="developmental stage">
    <text evidence="3">Expressed in the periderm of fetal skin from 16th week gestational age and in the granular and horny layers of the epidermis at 24th week gestational age and thereafter (at protein level).</text>
</comment>
<comment type="induction">
    <text evidence="3">By calcium and in psoriatic lesions.</text>
</comment>
<evidence type="ECO:0000250" key="1"/>
<evidence type="ECO:0000256" key="2">
    <source>
        <dbReference type="SAM" id="MobiDB-lite"/>
    </source>
</evidence>
<evidence type="ECO:0000269" key="3">
    <source>
    </source>
</evidence>
<evidence type="ECO:0007744" key="4">
    <source>
    </source>
</evidence>
<gene>
    <name type="primary">KPRP</name>
    <name type="synonym">C1orf45</name>
</gene>
<reference key="1">
    <citation type="journal article" date="2005" name="J. Invest. Dermatol.">
        <title>Molecular cloning and expression of human keratinocyte proline-rich protein (hKPRP), an epidermal marker isolated from calcium-induced differentiating keratinocytes.</title>
        <authorList>
            <person name="Lee W.-H."/>
            <person name="Jang S."/>
            <person name="Lee J.-S."/>
            <person name="Lee Y."/>
            <person name="Seo E.-Y."/>
            <person name="You K.-H."/>
            <person name="Lee S.-C."/>
            <person name="Nam K.I."/>
            <person name="Kim J.-M."/>
            <person name="Kee S.-H."/>
            <person name="Yang J.-M."/>
            <person name="Seo Y.-J."/>
            <person name="Park J.-K."/>
            <person name="Kim C.D."/>
            <person name="Lee J.-H."/>
        </authorList>
    </citation>
    <scope>NUCLEOTIDE SEQUENCE [MRNA]</scope>
    <scope>TISSUE SPECIFICITY</scope>
    <scope>DEVELOPMENTAL STAGE</scope>
    <scope>INDUCTION</scope>
</reference>
<reference key="2">
    <citation type="journal article" date="2006" name="Nature">
        <title>The DNA sequence and biological annotation of human chromosome 1.</title>
        <authorList>
            <person name="Gregory S.G."/>
            <person name="Barlow K.F."/>
            <person name="McLay K.E."/>
            <person name="Kaul R."/>
            <person name="Swarbreck D."/>
            <person name="Dunham A."/>
            <person name="Scott C.E."/>
            <person name="Howe K.L."/>
            <person name="Woodfine K."/>
            <person name="Spencer C.C.A."/>
            <person name="Jones M.C."/>
            <person name="Gillson C."/>
            <person name="Searle S."/>
            <person name="Zhou Y."/>
            <person name="Kokocinski F."/>
            <person name="McDonald L."/>
            <person name="Evans R."/>
            <person name="Phillips K."/>
            <person name="Atkinson A."/>
            <person name="Cooper R."/>
            <person name="Jones C."/>
            <person name="Hall R.E."/>
            <person name="Andrews T.D."/>
            <person name="Lloyd C."/>
            <person name="Ainscough R."/>
            <person name="Almeida J.P."/>
            <person name="Ambrose K.D."/>
            <person name="Anderson F."/>
            <person name="Andrew R.W."/>
            <person name="Ashwell R.I.S."/>
            <person name="Aubin K."/>
            <person name="Babbage A.K."/>
            <person name="Bagguley C.L."/>
            <person name="Bailey J."/>
            <person name="Beasley H."/>
            <person name="Bethel G."/>
            <person name="Bird C.P."/>
            <person name="Bray-Allen S."/>
            <person name="Brown J.Y."/>
            <person name="Brown A.J."/>
            <person name="Buckley D."/>
            <person name="Burton J."/>
            <person name="Bye J."/>
            <person name="Carder C."/>
            <person name="Chapman J.C."/>
            <person name="Clark S.Y."/>
            <person name="Clarke G."/>
            <person name="Clee C."/>
            <person name="Cobley V."/>
            <person name="Collier R.E."/>
            <person name="Corby N."/>
            <person name="Coville G.J."/>
            <person name="Davies J."/>
            <person name="Deadman R."/>
            <person name="Dunn M."/>
            <person name="Earthrowl M."/>
            <person name="Ellington A.G."/>
            <person name="Errington H."/>
            <person name="Frankish A."/>
            <person name="Frankland J."/>
            <person name="French L."/>
            <person name="Garner P."/>
            <person name="Garnett J."/>
            <person name="Gay L."/>
            <person name="Ghori M.R.J."/>
            <person name="Gibson R."/>
            <person name="Gilby L.M."/>
            <person name="Gillett W."/>
            <person name="Glithero R.J."/>
            <person name="Grafham D.V."/>
            <person name="Griffiths C."/>
            <person name="Griffiths-Jones S."/>
            <person name="Grocock R."/>
            <person name="Hammond S."/>
            <person name="Harrison E.S.I."/>
            <person name="Hart E."/>
            <person name="Haugen E."/>
            <person name="Heath P.D."/>
            <person name="Holmes S."/>
            <person name="Holt K."/>
            <person name="Howden P.J."/>
            <person name="Hunt A.R."/>
            <person name="Hunt S.E."/>
            <person name="Hunter G."/>
            <person name="Isherwood J."/>
            <person name="James R."/>
            <person name="Johnson C."/>
            <person name="Johnson D."/>
            <person name="Joy A."/>
            <person name="Kay M."/>
            <person name="Kershaw J.K."/>
            <person name="Kibukawa M."/>
            <person name="Kimberley A.M."/>
            <person name="King A."/>
            <person name="Knights A.J."/>
            <person name="Lad H."/>
            <person name="Laird G."/>
            <person name="Lawlor S."/>
            <person name="Leongamornlert D.A."/>
            <person name="Lloyd D.M."/>
            <person name="Loveland J."/>
            <person name="Lovell J."/>
            <person name="Lush M.J."/>
            <person name="Lyne R."/>
            <person name="Martin S."/>
            <person name="Mashreghi-Mohammadi M."/>
            <person name="Matthews L."/>
            <person name="Matthews N.S.W."/>
            <person name="McLaren S."/>
            <person name="Milne S."/>
            <person name="Mistry S."/>
            <person name="Moore M.J.F."/>
            <person name="Nickerson T."/>
            <person name="O'Dell C.N."/>
            <person name="Oliver K."/>
            <person name="Palmeiri A."/>
            <person name="Palmer S.A."/>
            <person name="Parker A."/>
            <person name="Patel D."/>
            <person name="Pearce A.V."/>
            <person name="Peck A.I."/>
            <person name="Pelan S."/>
            <person name="Phelps K."/>
            <person name="Phillimore B.J."/>
            <person name="Plumb R."/>
            <person name="Rajan J."/>
            <person name="Raymond C."/>
            <person name="Rouse G."/>
            <person name="Saenphimmachak C."/>
            <person name="Sehra H.K."/>
            <person name="Sheridan E."/>
            <person name="Shownkeen R."/>
            <person name="Sims S."/>
            <person name="Skuce C.D."/>
            <person name="Smith M."/>
            <person name="Steward C."/>
            <person name="Subramanian S."/>
            <person name="Sycamore N."/>
            <person name="Tracey A."/>
            <person name="Tromans A."/>
            <person name="Van Helmond Z."/>
            <person name="Wall M."/>
            <person name="Wallis J.M."/>
            <person name="White S."/>
            <person name="Whitehead S.L."/>
            <person name="Wilkinson J.E."/>
            <person name="Willey D.L."/>
            <person name="Williams H."/>
            <person name="Wilming L."/>
            <person name="Wray P.W."/>
            <person name="Wu Z."/>
            <person name="Coulson A."/>
            <person name="Vaudin M."/>
            <person name="Sulston J.E."/>
            <person name="Durbin R.M."/>
            <person name="Hubbard T."/>
            <person name="Wooster R."/>
            <person name="Dunham I."/>
            <person name="Carter N.P."/>
            <person name="McVean G."/>
            <person name="Ross M.T."/>
            <person name="Harrow J."/>
            <person name="Olson M.V."/>
            <person name="Beck S."/>
            <person name="Rogers J."/>
            <person name="Bentley D.R."/>
        </authorList>
    </citation>
    <scope>NUCLEOTIDE SEQUENCE [LARGE SCALE GENOMIC DNA]</scope>
</reference>
<reference key="3">
    <citation type="journal article" date="2010" name="Sci. Signal.">
        <title>Quantitative phosphoproteomics reveals widespread full phosphorylation site occupancy during mitosis.</title>
        <authorList>
            <person name="Olsen J.V."/>
            <person name="Vermeulen M."/>
            <person name="Santamaria A."/>
            <person name="Kumar C."/>
            <person name="Miller M.L."/>
            <person name="Jensen L.J."/>
            <person name="Gnad F."/>
            <person name="Cox J."/>
            <person name="Jensen T.S."/>
            <person name="Nigg E.A."/>
            <person name="Brunak S."/>
            <person name="Mann M."/>
        </authorList>
    </citation>
    <scope>PHOSPHORYLATION [LARGE SCALE ANALYSIS] AT SER-394</scope>
    <scope>IDENTIFICATION BY MASS SPECTROMETRY [LARGE SCALE ANALYSIS]</scope>
    <source>
        <tissue>Cervix carcinoma</tissue>
    </source>
</reference>
<reference key="4">
    <citation type="journal article" date="2011" name="BMC Syst. Biol.">
        <title>Initial characterization of the human central proteome.</title>
        <authorList>
            <person name="Burkard T.R."/>
            <person name="Planyavsky M."/>
            <person name="Kaupe I."/>
            <person name="Breitwieser F.P."/>
            <person name="Buerckstuemmer T."/>
            <person name="Bennett K.L."/>
            <person name="Superti-Furga G."/>
            <person name="Colinge J."/>
        </authorList>
    </citation>
    <scope>IDENTIFICATION BY MASS SPECTROMETRY [LARGE SCALE ANALYSIS]</scope>
</reference>
<keyword id="KW-0963">Cytoplasm</keyword>
<keyword id="KW-0597">Phosphoprotein</keyword>
<keyword id="KW-1267">Proteomics identification</keyword>
<keyword id="KW-1185">Reference proteome</keyword>
<sequence>MCDQQQIQCRLPLQQCCVKGPSFCSSQSPFAQSQVVVQAPCEMQIVDCPASCPVQVCQVSDQAPCQSQTTQVKCQSKTKQVKGQAQCQSKTTQVKGQAASQSQTSSVQSQAPCQSEVSYVQCEASQPVQTCFVECAPVCYTETCYVECPVQNYVPCPAPQPVQMYRGRPAVCQPQGRFSTQCQYQGSYSSCGPQFQSRATCNNYTPQFQLRPSYSSCFPQYRSRTSFSPCVPQCQTQGSYGSFTEQHRSRSTSRCLPPPRRLQLFPRSCSPPRRFEPCSSSYLPLRPSEGFPNYCTPPRRSEPIYNSRCPRRPISSCSQRRGPKCRIEISSPCCPRQVPPQRCPVEIPPIRRRSQSCGPQPSWGASCPELRPHVEPRPLPSFCPPRRLDQCPESPLQRCPPPAPRPRLRPEPCISLEPRPRPLPRQLSEPCLYPEPLPALRPTPRPVPLPRPGQCEIPEPRPCLQPCEHPEPCPRPEPIPLPAPCPSPEPCRETWRSPSPCWGPNPVPYPGDLGCHESSPHRLDTEAPYCGPSSYNQGQESGAGCGPGDVFPERRGQDGHGDQGNAFAGVKGEAKSAYF</sequence>
<name>KPRP_HUMAN</name>
<feature type="chain" id="PRO_0000271008" description="Keratinocyte proline-rich protein">
    <location>
        <begin position="1"/>
        <end position="579"/>
    </location>
</feature>
<feature type="region of interest" description="Disordered" evidence="2">
    <location>
        <begin position="526"/>
        <end position="579"/>
    </location>
</feature>
<feature type="compositionally biased region" description="Basic and acidic residues" evidence="2">
    <location>
        <begin position="551"/>
        <end position="561"/>
    </location>
</feature>
<feature type="modified residue" description="Phosphoserine" evidence="4">
    <location>
        <position position="394"/>
    </location>
</feature>
<feature type="sequence variant" id="VAR_029840" description="In dbSNP:rs17612167.">
    <original>Q</original>
    <variation>H</variation>
    <location>
        <position position="14"/>
    </location>
</feature>
<feature type="sequence variant" id="VAR_029841" description="In dbSNP:rs944683.">
    <original>V</original>
    <variation>A</variation>
    <location>
        <position position="37"/>
    </location>
</feature>
<feature type="sequence variant" id="VAR_029842" description="In dbSNP:rs16834457.">
    <original>C</original>
    <variation>R</variation>
    <location>
        <position position="113"/>
    </location>
</feature>
<feature type="sequence variant" id="VAR_029843" description="In dbSNP:rs16834461.">
    <original>R</original>
    <variation>H</variation>
    <location>
        <position position="168"/>
    </location>
</feature>
<feature type="sequence variant" id="VAR_029844" description="In dbSNP:rs4329520.">
    <original>C</original>
    <variation>S</variation>
    <location>
        <position position="413"/>
    </location>
</feature>
<feature type="sequence variant" id="VAR_029845" description="In dbSNP:rs6703294.">
    <original>P</original>
    <variation>T</variation>
    <location>
        <position position="532"/>
    </location>
</feature>
<dbReference type="EMBL" id="AY960854">
    <property type="protein sequence ID" value="AAX59055.1"/>
    <property type="molecule type" value="mRNA"/>
</dbReference>
<dbReference type="EMBL" id="AL353779">
    <property type="status" value="NOT_ANNOTATED_CDS"/>
    <property type="molecule type" value="Genomic_DNA"/>
</dbReference>
<dbReference type="CCDS" id="CCDS30862.1"/>
<dbReference type="RefSeq" id="NP_001020402.1">
    <property type="nucleotide sequence ID" value="NM_001025231.3"/>
</dbReference>
<dbReference type="RefSeq" id="XP_011507873.1">
    <property type="nucleotide sequence ID" value="XM_011509571.1"/>
</dbReference>
<dbReference type="RefSeq" id="XP_047277120.1">
    <property type="nucleotide sequence ID" value="XM_047421164.1"/>
</dbReference>
<dbReference type="BioGRID" id="138665">
    <property type="interactions" value="328"/>
</dbReference>
<dbReference type="FunCoup" id="Q5T749">
    <property type="interactions" value="371"/>
</dbReference>
<dbReference type="IntAct" id="Q5T749">
    <property type="interactions" value="195"/>
</dbReference>
<dbReference type="MINT" id="Q5T749"/>
<dbReference type="STRING" id="9606.ENSP00000475216"/>
<dbReference type="GlyGen" id="Q5T749">
    <property type="glycosylation" value="1 site, 1 O-linked glycan (1 site)"/>
</dbReference>
<dbReference type="iPTMnet" id="Q5T749"/>
<dbReference type="PhosphoSitePlus" id="Q5T749"/>
<dbReference type="SwissPalm" id="Q5T749"/>
<dbReference type="BioMuta" id="KPRP"/>
<dbReference type="DMDM" id="74745319"/>
<dbReference type="jPOST" id="Q5T749"/>
<dbReference type="MassIVE" id="Q5T749"/>
<dbReference type="PaxDb" id="9606-ENSP00000475216"/>
<dbReference type="PeptideAtlas" id="Q5T749"/>
<dbReference type="ProteomicsDB" id="64636"/>
<dbReference type="Antibodypedia" id="50318">
    <property type="antibodies" value="29 antibodies from 10 providers"/>
</dbReference>
<dbReference type="DNASU" id="448834"/>
<dbReference type="Ensembl" id="ENST00000606109.2">
    <property type="protein sequence ID" value="ENSP00000475216.1"/>
    <property type="gene ID" value="ENSG00000203786.7"/>
</dbReference>
<dbReference type="GeneID" id="448834"/>
<dbReference type="KEGG" id="hsa:448834"/>
<dbReference type="MANE-Select" id="ENST00000606109.2">
    <property type="protein sequence ID" value="ENSP00000475216.1"/>
    <property type="RefSeq nucleotide sequence ID" value="NM_001025231.3"/>
    <property type="RefSeq protein sequence ID" value="NP_001020402.1"/>
</dbReference>
<dbReference type="UCSC" id="uc057lai.1">
    <property type="organism name" value="human"/>
</dbReference>
<dbReference type="AGR" id="HGNC:31823"/>
<dbReference type="CTD" id="448834"/>
<dbReference type="DisGeNET" id="448834"/>
<dbReference type="GeneCards" id="KPRP"/>
<dbReference type="HGNC" id="HGNC:31823">
    <property type="gene designation" value="KPRP"/>
</dbReference>
<dbReference type="HPA" id="ENSG00000203786">
    <property type="expression patterns" value="Tissue enriched (skin)"/>
</dbReference>
<dbReference type="MalaCards" id="KPRP"/>
<dbReference type="MIM" id="613260">
    <property type="type" value="gene"/>
</dbReference>
<dbReference type="neXtProt" id="NX_Q5T749"/>
<dbReference type="OpenTargets" id="ENSG00000203786"/>
<dbReference type="PharmGKB" id="PA162393640"/>
<dbReference type="VEuPathDB" id="HostDB:ENSG00000203786"/>
<dbReference type="eggNOG" id="ENOG502S65C">
    <property type="taxonomic scope" value="Eukaryota"/>
</dbReference>
<dbReference type="GeneTree" id="ENSGT00730000111554"/>
<dbReference type="HOGENOM" id="CLU_024690_0_0_1"/>
<dbReference type="InParanoid" id="Q5T749"/>
<dbReference type="OMA" id="QAPCQSK"/>
<dbReference type="OrthoDB" id="9451806at2759"/>
<dbReference type="PAN-GO" id="Q5T749">
    <property type="GO annotations" value="0 GO annotations based on evolutionary models"/>
</dbReference>
<dbReference type="PhylomeDB" id="Q5T749"/>
<dbReference type="TreeFam" id="TF351578"/>
<dbReference type="PathwayCommons" id="Q5T749"/>
<dbReference type="Reactome" id="R-HSA-9725554">
    <property type="pathway name" value="Differentiation of Keratinocytes in Interfollicular Epidermis in Mammalian Skin"/>
</dbReference>
<dbReference type="SignaLink" id="Q5T749"/>
<dbReference type="BioGRID-ORCS" id="448834">
    <property type="hits" value="14 hits in 1145 CRISPR screens"/>
</dbReference>
<dbReference type="GenomeRNAi" id="448834"/>
<dbReference type="Pharos" id="Q5T749">
    <property type="development level" value="Tdark"/>
</dbReference>
<dbReference type="PRO" id="PR:Q5T749"/>
<dbReference type="Proteomes" id="UP000005640">
    <property type="component" value="Chromosome 1"/>
</dbReference>
<dbReference type="RNAct" id="Q5T749">
    <property type="molecule type" value="protein"/>
</dbReference>
<dbReference type="Bgee" id="ENSG00000203786">
    <property type="expression patterns" value="Expressed in skin of leg and 55 other cell types or tissues"/>
</dbReference>
<dbReference type="GO" id="GO:0005737">
    <property type="term" value="C:cytoplasm"/>
    <property type="evidence" value="ECO:0007669"/>
    <property type="project" value="UniProtKB-SubCell"/>
</dbReference>
<dbReference type="GO" id="GO:0070062">
    <property type="term" value="C:extracellular exosome"/>
    <property type="evidence" value="ECO:0007005"/>
    <property type="project" value="UniProtKB"/>
</dbReference>
<dbReference type="GO" id="GO:0002934">
    <property type="term" value="P:desmosome organization"/>
    <property type="evidence" value="ECO:0007669"/>
    <property type="project" value="Ensembl"/>
</dbReference>
<dbReference type="GO" id="GO:0061436">
    <property type="term" value="P:establishment of skin barrier"/>
    <property type="evidence" value="ECO:0007669"/>
    <property type="project" value="Ensembl"/>
</dbReference>
<dbReference type="GO" id="GO:0006954">
    <property type="term" value="P:inflammatory response"/>
    <property type="evidence" value="ECO:0007669"/>
    <property type="project" value="Ensembl"/>
</dbReference>
<dbReference type="InterPro" id="IPR052881">
    <property type="entry name" value="Keratinocyte_PR"/>
</dbReference>
<dbReference type="PANTHER" id="PTHR48138:SF2">
    <property type="entry name" value="KERATINOCYTE PROLINE-RICH PROTEIN"/>
    <property type="match status" value="1"/>
</dbReference>
<dbReference type="PANTHER" id="PTHR48138">
    <property type="entry name" value="KERATINOCYTE PROLINE-RICH PROTEIN-RELATED"/>
    <property type="match status" value="1"/>
</dbReference>